<reference key="1">
    <citation type="journal article" date="1988" name="Proc. Natl. Acad. Sci. U.S.A.">
        <title>Identification, cloning, and characterization of an immune activation gene.</title>
        <authorList>
            <person name="Lipes M.A."/>
            <person name="Napolitano M."/>
            <person name="Jeang K.-T."/>
            <person name="Chang N.T."/>
            <person name="Leonard W.J."/>
        </authorList>
    </citation>
    <scope>NUCLEOTIDE SEQUENCE [MRNA]</scope>
</reference>
<reference key="2">
    <citation type="journal article" date="1989" name="J. Immunol.">
        <title>Mitogenic activation of human T cells induces two closely related genes which share structural similarities with a new family of secreted factors.</title>
        <authorList>
            <person name="Zipfel P.F."/>
            <person name="Balke J."/>
            <person name="Irving S.G."/>
            <person name="Kelly K."/>
            <person name="Siebenlist U."/>
        </authorList>
    </citation>
    <scope>NUCLEOTIDE SEQUENCE [MRNA]</scope>
</reference>
<reference key="3">
    <citation type="journal article" date="1989" name="J. Immunol.">
        <title>A family of small inducible proteins secreted by leukocytes are members of a new superfamily that includes leukocyte and fibroblast-derived inflammatory agents, growth factors, and indicators of various activation processes.</title>
        <authorList>
            <person name="Brown K.D."/>
            <person name="Zurawski S.M."/>
            <person name="Mosmann T.R."/>
            <person name="Zurawski G."/>
        </authorList>
    </citation>
    <scope>NUCLEOTIDE SEQUENCE [MRNA]</scope>
    <source>
        <tissue>T-cell</tissue>
    </source>
</reference>
<reference key="4">
    <citation type="journal article" date="1990" name="Mol. Immunol.">
        <title>Cloning and expression of a lymphocyte activation gene (LAG-1).</title>
        <authorList>
            <person name="Baixeras E."/>
            <person name="Roman-Roman S."/>
            <person name="Jitsukawa S."/>
            <person name="Genevee C."/>
            <person name="Mechiche S."/>
            <person name="Viegas-Pequignot E."/>
            <person name="Hercend T."/>
            <person name="Triebel F."/>
        </authorList>
    </citation>
    <scope>NUCLEOTIDE SEQUENCE [GENOMIC DNA / MRNA]</scope>
    <source>
        <tissue>Natural killer cell</tissue>
    </source>
</reference>
<reference key="5">
    <citation type="journal article" date="1989" name="Eur. J. Immunol.">
        <title>Isolation and characterization of a cDNA encoding a putative cytokine which is induced by stimulation via the CD2 structure on human T lymphocytes.</title>
        <authorList>
            <person name="Chang H.C."/>
            <person name="Reinherz E.L."/>
        </authorList>
    </citation>
    <scope>NUCLEOTIDE SEQUENCE [MRNA]</scope>
    <source>
        <tissue>T-cell</tissue>
    </source>
</reference>
<reference key="6">
    <citation type="journal article" date="1991" name="J. Biol. Chem.">
        <title>The gene encoding the Act-2 cytokine. Genomic structure, HTLV-I/Tax responsiveness of 5' upstream sequences, and chromosomal localization.</title>
        <authorList>
            <person name="Napolitano M."/>
            <person name="Modi W.S."/>
            <person name="Cevario S.J."/>
            <person name="Gnarra J.R."/>
            <person name="Seuanez H.N."/>
            <person name="Leonard W.J."/>
        </authorList>
    </citation>
    <scope>NUCLEOTIDE SEQUENCE [GENOMIC DNA]</scope>
</reference>
<reference key="7">
    <citation type="journal article" date="2005" name="J. Immunol.">
        <title>Multiple products derived from two CCL4 loci: high incidence of a new polymorphism in HIV+ patients.</title>
        <authorList>
            <person name="Colobran R."/>
            <person name="Adreani P."/>
            <person name="Ashhab Y."/>
            <person name="Llano A."/>
            <person name="Este J.A."/>
            <person name="Dominguez O."/>
            <person name="Pujol-Borrell R."/>
            <person name="Juan M."/>
        </authorList>
    </citation>
    <scope>NUCLEOTIDE SEQUENCE [GENOMIC DNA / MRNA]</scope>
</reference>
<reference key="8">
    <citation type="submission" date="2004-06" db="EMBL/GenBank/DDBJ databases">
        <title>Cloning of human full open reading frames in Gateway(TM) system entry vector (pDONR201).</title>
        <authorList>
            <person name="Halleck A."/>
            <person name="Ebert L."/>
            <person name="Mkoundinya M."/>
            <person name="Schick M."/>
            <person name="Eisenstein S."/>
            <person name="Neubert P."/>
            <person name="Kstrang K."/>
            <person name="Schatten R."/>
            <person name="Shen B."/>
            <person name="Henze S."/>
            <person name="Mar W."/>
            <person name="Korn B."/>
            <person name="Zuo D."/>
            <person name="Hu Y."/>
            <person name="LaBaer J."/>
        </authorList>
    </citation>
    <scope>NUCLEOTIDE SEQUENCE [LARGE SCALE MRNA]</scope>
</reference>
<reference key="9">
    <citation type="journal article" date="2006" name="Nature">
        <title>DNA sequence of human chromosome 17 and analysis of rearrangement in the human lineage.</title>
        <authorList>
            <person name="Zody M.C."/>
            <person name="Garber M."/>
            <person name="Adams D.J."/>
            <person name="Sharpe T."/>
            <person name="Harrow J."/>
            <person name="Lupski J.R."/>
            <person name="Nicholson C."/>
            <person name="Searle S.M."/>
            <person name="Wilming L."/>
            <person name="Young S.K."/>
            <person name="Abouelleil A."/>
            <person name="Allen N.R."/>
            <person name="Bi W."/>
            <person name="Bloom T."/>
            <person name="Borowsky M.L."/>
            <person name="Bugalter B.E."/>
            <person name="Butler J."/>
            <person name="Chang J.L."/>
            <person name="Chen C.-K."/>
            <person name="Cook A."/>
            <person name="Corum B."/>
            <person name="Cuomo C.A."/>
            <person name="de Jong P.J."/>
            <person name="DeCaprio D."/>
            <person name="Dewar K."/>
            <person name="FitzGerald M."/>
            <person name="Gilbert J."/>
            <person name="Gibson R."/>
            <person name="Gnerre S."/>
            <person name="Goldstein S."/>
            <person name="Grafham D.V."/>
            <person name="Grocock R."/>
            <person name="Hafez N."/>
            <person name="Hagopian D.S."/>
            <person name="Hart E."/>
            <person name="Norman C.H."/>
            <person name="Humphray S."/>
            <person name="Jaffe D.B."/>
            <person name="Jones M."/>
            <person name="Kamal M."/>
            <person name="Khodiyar V.K."/>
            <person name="LaButti K."/>
            <person name="Laird G."/>
            <person name="Lehoczky J."/>
            <person name="Liu X."/>
            <person name="Lokyitsang T."/>
            <person name="Loveland J."/>
            <person name="Lui A."/>
            <person name="Macdonald P."/>
            <person name="Major J.E."/>
            <person name="Matthews L."/>
            <person name="Mauceli E."/>
            <person name="McCarroll S.A."/>
            <person name="Mihalev A.H."/>
            <person name="Mudge J."/>
            <person name="Nguyen C."/>
            <person name="Nicol R."/>
            <person name="O'Leary S.B."/>
            <person name="Osoegawa K."/>
            <person name="Schwartz D.C."/>
            <person name="Shaw-Smith C."/>
            <person name="Stankiewicz P."/>
            <person name="Steward C."/>
            <person name="Swarbreck D."/>
            <person name="Venkataraman V."/>
            <person name="Whittaker C.A."/>
            <person name="Yang X."/>
            <person name="Zimmer A.R."/>
            <person name="Bradley A."/>
            <person name="Hubbard T."/>
            <person name="Birren B.W."/>
            <person name="Rogers J."/>
            <person name="Lander E.S."/>
            <person name="Nusbaum C."/>
        </authorList>
    </citation>
    <scope>NUCLEOTIDE SEQUENCE [LARGE SCALE GENOMIC DNA]</scope>
</reference>
<reference key="10">
    <citation type="journal article" date="2004" name="Genome Res.">
        <title>The status, quality, and expansion of the NIH full-length cDNA project: the Mammalian Gene Collection (MGC).</title>
        <authorList>
            <consortium name="The MGC Project Team"/>
        </authorList>
    </citation>
    <scope>NUCLEOTIDE SEQUENCE [LARGE SCALE MRNA]</scope>
    <scope>VARIANT THR-80</scope>
</reference>
<reference key="11">
    <citation type="journal article" date="1989" name="J. Immunol.">
        <title>A novel polypeptide secreted by activated human T lymphocytes.</title>
        <authorList>
            <person name="Miller M.D."/>
            <person name="Hata S."/>
            <person name="Waal Malefyt R."/>
            <person name="Krangel M.S."/>
        </authorList>
    </citation>
    <scope>NUCLEOTIDE SEQUENCE [MRNA] OF 6-92</scope>
    <scope>VARIANT THR-80</scope>
    <source>
        <tissue>T-cell</tissue>
    </source>
</reference>
<reference key="12">
    <citation type="journal article" date="1998" name="Eur. J. Immunol.">
        <title>Identification of the CC chemokines TARC and macrophage inflammatory protein-1 beta as novel functional ligands for the CCR8 receptor.</title>
        <authorList>
            <person name="Bernardini G."/>
            <person name="Hedrick J."/>
            <person name="Sozzani S."/>
            <person name="Luini W."/>
            <person name="Spinetti G."/>
            <person name="Weiss M."/>
            <person name="Menon S."/>
            <person name="Zlotnik A."/>
            <person name="Mantovani A."/>
            <person name="Santoni A."/>
            <person name="Napolitano M."/>
        </authorList>
    </citation>
    <scope>RECEPTOR INTERACTION</scope>
</reference>
<reference key="13">
    <citation type="journal article" date="1995" name="Science">
        <title>Identification of RANTES, MIP-1 alpha, and MIP-1 beta as the major HIV-suppressive factors produced by CD8+ T cells.</title>
        <authorList>
            <person name="Cocchi F."/>
            <person name="DeVico A.L."/>
            <person name="Garzino-Demo A."/>
            <person name="Arya S.K."/>
            <person name="Gallo R.C."/>
            <person name="Lusso P."/>
        </authorList>
    </citation>
    <scope>FUNCTION</scope>
</reference>
<reference key="14">
    <citation type="journal article" date="1999" name="Eur. J. Immunol.">
        <title>The assignment of chemokine-chemokine receptor pairs: TARC and MIP-1 beta are not ligands for human CC-chemokine receptor 8.</title>
        <authorList>
            <person name="Garlisi C.G."/>
            <person name="Xiao H."/>
            <person name="Tian F."/>
            <person name="Hedrick J.A."/>
            <person name="Billah M.M."/>
            <person name="Egan R.W."/>
            <person name="Umland S.P."/>
        </authorList>
    </citation>
    <scope>FUNCTION</scope>
</reference>
<reference key="15">
    <citation type="journal article" date="2002" name="J. Biol. Chem.">
        <title>Natural truncation of the chemokine MIP-1beta/CCL4 affects receptor specificity but not anti-HIV-1 activity.</title>
        <authorList>
            <person name="Guan E."/>
            <person name="Wang J."/>
            <person name="Roderiquez G."/>
            <person name="Norcross M.A."/>
        </authorList>
    </citation>
    <scope>IDENTIFICATION OF MIP-1-BETA(3-69) BY MASS SPECTROMETRY</scope>
    <scope>FUNCTION</scope>
    <scope>SUBUNIT</scope>
</reference>
<reference key="16">
    <citation type="journal article" date="2002" name="Cytokine Growth Factor Rev.">
        <title>Macrophage inflammatory protein-1.</title>
        <authorList>
            <person name="Menten P."/>
            <person name="Wuyts A."/>
            <person name="Van Damme J."/>
        </authorList>
    </citation>
    <scope>REVIEW</scope>
</reference>
<reference key="17">
    <citation type="journal article" date="1994" name="Science">
        <title>High-resolution solution structure of the beta chemokine hMIP-1 beta by multidimensional NMR.</title>
        <authorList>
            <person name="Lodi P.J."/>
            <person name="Garrett D.S."/>
            <person name="Kuscewski J."/>
            <person name="Tsang M.L.S."/>
            <person name="Weatherbee J.A."/>
            <person name="Leonard W.J."/>
            <person name="Gronenborn A.M."/>
            <person name="Clore G.M."/>
        </authorList>
    </citation>
    <scope>STRUCTURE BY NMR</scope>
</reference>
<accession>P13236</accession>
<accession>P22617</accession>
<accession>Q13704</accession>
<accession>Q3SXL8</accession>
<accession>Q6FGI8</accession>
<sequence length="92" mass="10212">MKLCVTVLSLLMLVAAFCSPALSAPMGSDPPTACCFSYTARKLPRNFVVDYYETSSLCSQPAVVFQTKRSKQVCADPSESWVQEYVYDLELN</sequence>
<organism>
    <name type="scientific">Homo sapiens</name>
    <name type="common">Human</name>
    <dbReference type="NCBI Taxonomy" id="9606"/>
    <lineage>
        <taxon>Eukaryota</taxon>
        <taxon>Metazoa</taxon>
        <taxon>Chordata</taxon>
        <taxon>Craniata</taxon>
        <taxon>Vertebrata</taxon>
        <taxon>Euteleostomi</taxon>
        <taxon>Mammalia</taxon>
        <taxon>Eutheria</taxon>
        <taxon>Euarchontoglires</taxon>
        <taxon>Primates</taxon>
        <taxon>Haplorrhini</taxon>
        <taxon>Catarrhini</taxon>
        <taxon>Hominidae</taxon>
        <taxon>Homo</taxon>
    </lineage>
</organism>
<dbReference type="EMBL" id="J04130">
    <property type="protein sequence ID" value="AAA51576.1"/>
    <property type="molecule type" value="mRNA"/>
</dbReference>
<dbReference type="EMBL" id="M25316">
    <property type="protein sequence ID" value="AAA57256.1"/>
    <property type="molecule type" value="mRNA"/>
</dbReference>
<dbReference type="EMBL" id="M23502">
    <property type="protein sequence ID" value="AAA36656.1"/>
    <property type="molecule type" value="mRNA"/>
</dbReference>
<dbReference type="EMBL" id="X53683">
    <property type="protein sequence ID" value="CAA37723.1"/>
    <property type="molecule type" value="mRNA"/>
</dbReference>
<dbReference type="EMBL" id="X53682">
    <property type="protein sequence ID" value="CAA37722.2"/>
    <property type="status" value="ALT_SEQ"/>
    <property type="molecule type" value="Genomic_DNA"/>
</dbReference>
<dbReference type="EMBL" id="X16166">
    <property type="protein sequence ID" value="CAA34291.1"/>
    <property type="molecule type" value="mRNA"/>
</dbReference>
<dbReference type="EMBL" id="M69203">
    <property type="protein sequence ID" value="AAB00790.1"/>
    <property type="molecule type" value="Genomic_DNA"/>
</dbReference>
<dbReference type="EMBL" id="M69201">
    <property type="protein sequence ID" value="AAB00790.1"/>
    <property type="status" value="JOINED"/>
    <property type="molecule type" value="Genomic_DNA"/>
</dbReference>
<dbReference type="EMBL" id="M69202">
    <property type="protein sequence ID" value="AAB00790.1"/>
    <property type="status" value="JOINED"/>
    <property type="molecule type" value="Genomic_DNA"/>
</dbReference>
<dbReference type="EMBL" id="AY766446">
    <property type="protein sequence ID" value="AAX07305.1"/>
    <property type="molecule type" value="mRNA"/>
</dbReference>
<dbReference type="EMBL" id="AY766459">
    <property type="protein sequence ID" value="AAX07292.1"/>
    <property type="molecule type" value="Genomic_DNA"/>
</dbReference>
<dbReference type="EMBL" id="CR542119">
    <property type="protein sequence ID" value="CAG46916.1"/>
    <property type="molecule type" value="mRNA"/>
</dbReference>
<dbReference type="EMBL" id="AC003976">
    <property type="status" value="NOT_ANNOTATED_CDS"/>
    <property type="molecule type" value="Genomic_DNA"/>
</dbReference>
<dbReference type="EMBL" id="BC104226">
    <property type="protein sequence ID" value="AAI04227.1"/>
    <property type="molecule type" value="mRNA"/>
</dbReference>
<dbReference type="EMBL" id="BC104227">
    <property type="protein sequence ID" value="AAI04228.1"/>
    <property type="molecule type" value="mRNA"/>
</dbReference>
<dbReference type="EMBL" id="BC107433">
    <property type="protein sequence ID" value="AAI07434.1"/>
    <property type="molecule type" value="mRNA"/>
</dbReference>
<dbReference type="EMBL" id="M57503">
    <property type="protein sequence ID" value="AAA36752.1"/>
    <property type="molecule type" value="mRNA"/>
</dbReference>
<dbReference type="CCDS" id="CCDS11308.1"/>
<dbReference type="PIR" id="JH0319">
    <property type="entry name" value="A31767"/>
</dbReference>
<dbReference type="RefSeq" id="NP_002975.1">
    <property type="nucleotide sequence ID" value="NM_002984.4"/>
</dbReference>
<dbReference type="RefSeq" id="NP_996890.1">
    <property type="nucleotide sequence ID" value="NM_207007.3"/>
</dbReference>
<dbReference type="PDB" id="1HUM">
    <property type="method" value="NMR"/>
    <property type="chains" value="A/B=24-92"/>
</dbReference>
<dbReference type="PDB" id="1HUN">
    <property type="method" value="NMR"/>
    <property type="chains" value="A/B=24-92"/>
</dbReference>
<dbReference type="PDB" id="1JE4">
    <property type="method" value="NMR"/>
    <property type="chains" value="A=24-92"/>
</dbReference>
<dbReference type="PDB" id="2FFK">
    <property type="method" value="NMR"/>
    <property type="chains" value="B=24-92"/>
</dbReference>
<dbReference type="PDB" id="2FIN">
    <property type="method" value="NMR"/>
    <property type="chains" value="B=24-92"/>
</dbReference>
<dbReference type="PDB" id="2X6L">
    <property type="method" value="X-ray"/>
    <property type="resolution" value="2.60 A"/>
    <property type="chains" value="A/B/C/D/E=24-92"/>
</dbReference>
<dbReference type="PDB" id="3TN2">
    <property type="method" value="X-ray"/>
    <property type="resolution" value="1.60 A"/>
    <property type="chains" value="A=24-91"/>
</dbReference>
<dbReference type="PDB" id="4RAL">
    <property type="method" value="X-ray"/>
    <property type="resolution" value="3.15 A"/>
    <property type="chains" value="D/E=24-92"/>
</dbReference>
<dbReference type="PDBsum" id="1HUM"/>
<dbReference type="PDBsum" id="1HUN"/>
<dbReference type="PDBsum" id="1JE4"/>
<dbReference type="PDBsum" id="2FFK"/>
<dbReference type="PDBsum" id="2FIN"/>
<dbReference type="PDBsum" id="2X6L"/>
<dbReference type="PDBsum" id="3TN2"/>
<dbReference type="PDBsum" id="4RAL"/>
<dbReference type="SMR" id="P13236"/>
<dbReference type="BioGRID" id="112254">
    <property type="interactions" value="26"/>
</dbReference>
<dbReference type="BioGRID" id="132664">
    <property type="interactions" value="24"/>
</dbReference>
<dbReference type="DIP" id="DIP-5840N"/>
<dbReference type="FunCoup" id="P13236">
    <property type="interactions" value="962"/>
</dbReference>
<dbReference type="IntAct" id="P13236">
    <property type="interactions" value="27"/>
</dbReference>
<dbReference type="MINT" id="P13236"/>
<dbReference type="STRING" id="9606.ENSP00000482259"/>
<dbReference type="BindingDB" id="P13236"/>
<dbReference type="BioMuta" id="CCL4"/>
<dbReference type="DMDM" id="127080"/>
<dbReference type="MassIVE" id="P13236"/>
<dbReference type="PaxDb" id="9606-ENSP00000482259"/>
<dbReference type="PeptideAtlas" id="P13236"/>
<dbReference type="Antibodypedia" id="72629">
    <property type="antibodies" value="619 antibodies from 41 providers"/>
</dbReference>
<dbReference type="DNASU" id="6351"/>
<dbReference type="Ensembl" id="ENST00000615863.2">
    <property type="protein sequence ID" value="ENSP00000482259.1"/>
    <property type="gene ID" value="ENSG00000275302.2"/>
</dbReference>
<dbReference type="Ensembl" id="ENST00000617322.4">
    <property type="protein sequence ID" value="ENSP00000480345.1"/>
    <property type="gene ID" value="ENSG00000275824.4"/>
</dbReference>
<dbReference type="Ensembl" id="ENST00000621600.4">
    <property type="protein sequence ID" value="ENSP00000478708.1"/>
    <property type="gene ID" value="ENSG00000277943.4"/>
</dbReference>
<dbReference type="GeneID" id="388372"/>
<dbReference type="GeneID" id="6351"/>
<dbReference type="KEGG" id="hsa:388372"/>
<dbReference type="KEGG" id="hsa:6351"/>
<dbReference type="MANE-Select" id="ENST00000615863.2">
    <property type="protein sequence ID" value="ENSP00000482259.1"/>
    <property type="RefSeq nucleotide sequence ID" value="NM_002984.4"/>
    <property type="RefSeq protein sequence ID" value="NP_002975.1"/>
</dbReference>
<dbReference type="UCSC" id="uc002hkw.3">
    <property type="organism name" value="human"/>
</dbReference>
<dbReference type="AGR" id="HGNC:10630"/>
<dbReference type="AGR" id="HGNC:10631"/>
<dbReference type="CTD" id="388372"/>
<dbReference type="CTD" id="6351"/>
<dbReference type="DisGeNET" id="388372"/>
<dbReference type="DisGeNET" id="6351"/>
<dbReference type="GeneCards" id="CCL4"/>
<dbReference type="HGNC" id="HGNC:10630">
    <property type="gene designation" value="CCL4"/>
</dbReference>
<dbReference type="HPA" id="ENSG00000275302">
    <property type="expression patterns" value="Tissue enhanced (bone)"/>
</dbReference>
<dbReference type="MIM" id="182284">
    <property type="type" value="gene"/>
</dbReference>
<dbReference type="neXtProt" id="NX_P13236"/>
<dbReference type="OpenTargets" id="ENSG00000275302"/>
<dbReference type="VEuPathDB" id="HostDB:ENSG00000275302"/>
<dbReference type="eggNOG" id="ENOG502S8M4">
    <property type="taxonomic scope" value="Eukaryota"/>
</dbReference>
<dbReference type="GeneTree" id="ENSGT01100000263482"/>
<dbReference type="HOGENOM" id="CLU_141716_4_0_1"/>
<dbReference type="InParanoid" id="P13236"/>
<dbReference type="OMA" id="VCANPDQ"/>
<dbReference type="OrthoDB" id="9512143at2759"/>
<dbReference type="PAN-GO" id="P13236">
    <property type="GO annotations" value="15 GO annotations based on evolutionary models"/>
</dbReference>
<dbReference type="PhylomeDB" id="P13236"/>
<dbReference type="TreeFam" id="TF334888"/>
<dbReference type="PathwayCommons" id="P13236"/>
<dbReference type="Reactome" id="R-HSA-380108">
    <property type="pathway name" value="Chemokine receptors bind chemokines"/>
</dbReference>
<dbReference type="Reactome" id="R-HSA-418594">
    <property type="pathway name" value="G alpha (i) signalling events"/>
</dbReference>
<dbReference type="Reactome" id="R-HSA-6783783">
    <property type="pathway name" value="Interleukin-10 signaling"/>
</dbReference>
<dbReference type="SignaLink" id="P13236"/>
<dbReference type="SIGNOR" id="P13236"/>
<dbReference type="BioGRID-ORCS" id="388372">
    <property type="hits" value="8 hits in 194 CRISPR screens"/>
</dbReference>
<dbReference type="BioGRID-ORCS" id="6351">
    <property type="hits" value="6 hits in 1021 CRISPR screens"/>
</dbReference>
<dbReference type="ChiTaRS" id="CCL4">
    <property type="organism name" value="human"/>
</dbReference>
<dbReference type="EvolutionaryTrace" id="P13236"/>
<dbReference type="GeneWiki" id="CCL4"/>
<dbReference type="Pharos" id="P13236">
    <property type="development level" value="Tbio"/>
</dbReference>
<dbReference type="PRO" id="PR:P13236"/>
<dbReference type="Proteomes" id="UP000005640">
    <property type="component" value="Chromosome 17"/>
</dbReference>
<dbReference type="RNAct" id="P13236">
    <property type="molecule type" value="protein"/>
</dbReference>
<dbReference type="Bgee" id="ENSG00000275302">
    <property type="expression patterns" value="Expressed in granulocyte and 102 other cell types or tissues"/>
</dbReference>
<dbReference type="ExpressionAtlas" id="P13236">
    <property type="expression patterns" value="baseline and differential"/>
</dbReference>
<dbReference type="GO" id="GO:0005576">
    <property type="term" value="C:extracellular region"/>
    <property type="evidence" value="ECO:0000304"/>
    <property type="project" value="Reactome"/>
</dbReference>
<dbReference type="GO" id="GO:0005615">
    <property type="term" value="C:extracellular space"/>
    <property type="evidence" value="ECO:0000318"/>
    <property type="project" value="GO_Central"/>
</dbReference>
<dbReference type="GO" id="GO:0048020">
    <property type="term" value="F:CCR chemokine receptor binding"/>
    <property type="evidence" value="ECO:0000318"/>
    <property type="project" value="GO_Central"/>
</dbReference>
<dbReference type="GO" id="GO:0031726">
    <property type="term" value="F:CCR1 chemokine receptor binding"/>
    <property type="evidence" value="ECO:0000353"/>
    <property type="project" value="UniProtKB"/>
</dbReference>
<dbReference type="GO" id="GO:0031730">
    <property type="term" value="F:CCR5 chemokine receptor binding"/>
    <property type="evidence" value="ECO:0000353"/>
    <property type="project" value="UniProtKB"/>
</dbReference>
<dbReference type="GO" id="GO:0008009">
    <property type="term" value="F:chemokine activity"/>
    <property type="evidence" value="ECO:0000318"/>
    <property type="project" value="GO_Central"/>
</dbReference>
<dbReference type="GO" id="GO:0005125">
    <property type="term" value="F:cytokine activity"/>
    <property type="evidence" value="ECO:0000304"/>
    <property type="project" value="ProtInc"/>
</dbReference>
<dbReference type="GO" id="GO:0042802">
    <property type="term" value="F:identical protein binding"/>
    <property type="evidence" value="ECO:0000353"/>
    <property type="project" value="IntAct"/>
</dbReference>
<dbReference type="GO" id="GO:0061844">
    <property type="term" value="P:antimicrobial humoral immune response mediated by antimicrobial peptide"/>
    <property type="evidence" value="ECO:0000318"/>
    <property type="project" value="GO_Central"/>
</dbReference>
<dbReference type="GO" id="GO:0007155">
    <property type="term" value="P:cell adhesion"/>
    <property type="evidence" value="ECO:0000304"/>
    <property type="project" value="ProtInc"/>
</dbReference>
<dbReference type="GO" id="GO:0007267">
    <property type="term" value="P:cell-cell signaling"/>
    <property type="evidence" value="ECO:0000304"/>
    <property type="project" value="ProtInc"/>
</dbReference>
<dbReference type="GO" id="GO:0070098">
    <property type="term" value="P:chemokine-mediated signaling pathway"/>
    <property type="evidence" value="ECO:0000318"/>
    <property type="project" value="GO_Central"/>
</dbReference>
<dbReference type="GO" id="GO:0048245">
    <property type="term" value="P:eosinophil chemotaxis"/>
    <property type="evidence" value="ECO:0000318"/>
    <property type="project" value="GO_Central"/>
</dbReference>
<dbReference type="GO" id="GO:0007163">
    <property type="term" value="P:establishment or maintenance of cell polarity"/>
    <property type="evidence" value="ECO:0000304"/>
    <property type="project" value="ProtInc"/>
</dbReference>
<dbReference type="GO" id="GO:0006955">
    <property type="term" value="P:immune response"/>
    <property type="evidence" value="ECO:0000304"/>
    <property type="project" value="ProtInc"/>
</dbReference>
<dbReference type="GO" id="GO:0006954">
    <property type="term" value="P:inflammatory response"/>
    <property type="evidence" value="ECO:0000318"/>
    <property type="project" value="GO_Central"/>
</dbReference>
<dbReference type="GO" id="GO:0043922">
    <property type="term" value="P:negative regulation by host of viral transcription"/>
    <property type="evidence" value="ECO:0000314"/>
    <property type="project" value="UniProtKB"/>
</dbReference>
<dbReference type="GO" id="GO:0051928">
    <property type="term" value="P:positive regulation of calcium ion transport"/>
    <property type="evidence" value="ECO:0000314"/>
    <property type="project" value="UniProtKB"/>
</dbReference>
<dbReference type="GO" id="GO:0050850">
    <property type="term" value="P:positive regulation of calcium-mediated signaling"/>
    <property type="evidence" value="ECO:0000315"/>
    <property type="project" value="UniProtKB"/>
</dbReference>
<dbReference type="GO" id="GO:0030335">
    <property type="term" value="P:positive regulation of cell migration"/>
    <property type="evidence" value="ECO:0000318"/>
    <property type="project" value="GO_Central"/>
</dbReference>
<dbReference type="GO" id="GO:2000503">
    <property type="term" value="P:positive regulation of natural killer cell chemotaxis"/>
    <property type="evidence" value="ECO:0000314"/>
    <property type="project" value="UniProtKB"/>
</dbReference>
<dbReference type="GO" id="GO:0009636">
    <property type="term" value="P:response to toxic substance"/>
    <property type="evidence" value="ECO:0000314"/>
    <property type="project" value="UniProtKB"/>
</dbReference>
<dbReference type="GO" id="GO:0009615">
    <property type="term" value="P:response to virus"/>
    <property type="evidence" value="ECO:0000304"/>
    <property type="project" value="ProtInc"/>
</dbReference>
<dbReference type="GO" id="GO:0007165">
    <property type="term" value="P:signal transduction"/>
    <property type="evidence" value="ECO:0000304"/>
    <property type="project" value="ProtInc"/>
</dbReference>
<dbReference type="CDD" id="cd00272">
    <property type="entry name" value="Chemokine_CC"/>
    <property type="match status" value="1"/>
</dbReference>
<dbReference type="FunFam" id="2.40.50.40:FF:000002">
    <property type="entry name" value="C-C motif chemokine"/>
    <property type="match status" value="1"/>
</dbReference>
<dbReference type="Gene3D" id="2.40.50.40">
    <property type="match status" value="1"/>
</dbReference>
<dbReference type="InterPro" id="IPR039809">
    <property type="entry name" value="Chemokine_b/g/d"/>
</dbReference>
<dbReference type="InterPro" id="IPR000827">
    <property type="entry name" value="Chemokine_CC_CS"/>
</dbReference>
<dbReference type="InterPro" id="IPR001811">
    <property type="entry name" value="Chemokine_IL8-like_dom"/>
</dbReference>
<dbReference type="InterPro" id="IPR036048">
    <property type="entry name" value="Interleukin_8-like_sf"/>
</dbReference>
<dbReference type="PANTHER" id="PTHR12015:SF103">
    <property type="entry name" value="C-C MOTIF CHEMOKINE 4-RELATED"/>
    <property type="match status" value="1"/>
</dbReference>
<dbReference type="PANTHER" id="PTHR12015">
    <property type="entry name" value="SMALL INDUCIBLE CYTOKINE A"/>
    <property type="match status" value="1"/>
</dbReference>
<dbReference type="Pfam" id="PF00048">
    <property type="entry name" value="IL8"/>
    <property type="match status" value="1"/>
</dbReference>
<dbReference type="SMART" id="SM00199">
    <property type="entry name" value="SCY"/>
    <property type="match status" value="1"/>
</dbReference>
<dbReference type="SUPFAM" id="SSF54117">
    <property type="entry name" value="Interleukin 8-like chemokines"/>
    <property type="match status" value="1"/>
</dbReference>
<dbReference type="PROSITE" id="PS00472">
    <property type="entry name" value="SMALL_CYTOKINES_CC"/>
    <property type="match status" value="1"/>
</dbReference>
<gene>
    <name type="primary">CCL4</name>
    <name type="synonym">LAG1</name>
    <name type="synonym">MIP1B</name>
    <name type="synonym">SCYA4</name>
</gene>
<proteinExistence type="evidence at protein level"/>
<evidence type="ECO:0000250" key="1"/>
<evidence type="ECO:0000269" key="2">
    <source>
    </source>
</evidence>
<evidence type="ECO:0000269" key="3">
    <source>
    </source>
</evidence>
<evidence type="ECO:0000269" key="4">
    <source>
    </source>
</evidence>
<evidence type="ECO:0000269" key="5">
    <source>
    </source>
</evidence>
<evidence type="ECO:0000269" key="6">
    <source>
    </source>
</evidence>
<evidence type="ECO:0000305" key="7"/>
<evidence type="ECO:0000305" key="8">
    <source>
    </source>
</evidence>
<evidence type="ECO:0007829" key="9">
    <source>
        <dbReference type="PDB" id="2FFK"/>
    </source>
</evidence>
<evidence type="ECO:0007829" key="10">
    <source>
        <dbReference type="PDB" id="3TN2"/>
    </source>
</evidence>
<protein>
    <recommendedName>
        <fullName>C-C motif chemokine 4</fullName>
    </recommendedName>
    <alternativeName>
        <fullName>G-26 T-lymphocyte-secreted protein</fullName>
    </alternativeName>
    <alternativeName>
        <fullName>HC21</fullName>
    </alternativeName>
    <alternativeName>
        <fullName>Lymphocyte activation gene 1 protein</fullName>
        <shortName>LAG-1</shortName>
    </alternativeName>
    <alternativeName>
        <fullName>MIP-1-beta(1-69)</fullName>
    </alternativeName>
    <alternativeName>
        <fullName>Macrophage inflammatory protein 1-beta</fullName>
        <shortName>MIP-1-beta</shortName>
    </alternativeName>
    <alternativeName>
        <fullName>PAT 744</fullName>
    </alternativeName>
    <alternativeName>
        <fullName>Protein H400</fullName>
    </alternativeName>
    <alternativeName>
        <fullName>SIS-gamma</fullName>
    </alternativeName>
    <alternativeName>
        <fullName>Small-inducible cytokine A4</fullName>
    </alternativeName>
    <alternativeName>
        <fullName>T-cell activation protein 2</fullName>
        <shortName>ACT-2</shortName>
    </alternativeName>
    <component>
        <recommendedName>
            <fullName>MIP-1-beta(3-69)</fullName>
        </recommendedName>
    </component>
</protein>
<name>CCL4_HUMAN</name>
<keyword id="KW-0002">3D-structure</keyword>
<keyword id="KW-0145">Chemotaxis</keyword>
<keyword id="KW-0202">Cytokine</keyword>
<keyword id="KW-1015">Disulfide bond</keyword>
<keyword id="KW-0395">Inflammatory response</keyword>
<keyword id="KW-1267">Proteomics identification</keyword>
<keyword id="KW-1185">Reference proteome</keyword>
<keyword id="KW-0964">Secreted</keyword>
<keyword id="KW-0732">Signal</keyword>
<comment type="function">
    <text evidence="2 3 6">Monokine with inflammatory and chemokinetic properties. Binds to CCR5. One of the major HIV-suppressive factors produced by CD8+ T-cells. Recombinant MIP-1-beta induces a dose-dependent inhibition of different strains of HIV-1, HIV-2, and simian immunodeficiency virus (SIV). The processed form MIP-1-beta(3-69) retains the abilities to induce down-modulation of surface expression of the chemokine receptor CCR5 and to inhibit the CCR5-mediated entry of HIV-1 in T-cells. MIP-1-beta(3-69) is also a ligand for CCR1 and CCR2 isoform B.</text>
</comment>
<comment type="subunit">
    <text evidence="3">Homodimer and heterodimer of MIP-1-alpha(4-69) and MIP-1-beta(3-69).</text>
</comment>
<comment type="interaction">
    <interactant intactId="EBI-2873970">
        <id>P13236</id>
    </interactant>
    <interactant intactId="EBI-11343438">
        <id>Q3SXY8</id>
        <label>ARL13B</label>
    </interactant>
    <organismsDiffer>false</organismsDiffer>
    <experiments>3</experiments>
</comment>
<comment type="interaction">
    <interactant intactId="EBI-2873970">
        <id>P13236</id>
    </interactant>
    <interactant intactId="EBI-2873970">
        <id>P13236</id>
        <label>CCL4</label>
    </interactant>
    <organismsDiffer>false</organismsDiffer>
    <experiments>3</experiments>
</comment>
<comment type="interaction">
    <interactant intactId="EBI-2873970">
        <id>P13236</id>
    </interactant>
    <interactant intactId="EBI-2835940">
        <id>P34972</id>
        <label>CNR2</label>
    </interactant>
    <organismsDiffer>false</organismsDiffer>
    <experiments>3</experiments>
</comment>
<comment type="interaction">
    <interactant intactId="EBI-2873970">
        <id>P13236</id>
    </interactant>
    <interactant intactId="EBI-17458373">
        <id>P48165</id>
        <label>GJA8</label>
    </interactant>
    <organismsDiffer>false</organismsDiffer>
    <experiments>3</experiments>
</comment>
<comment type="interaction">
    <interactant intactId="EBI-2873970">
        <id>P13236</id>
    </interactant>
    <interactant intactId="EBI-13345167">
        <id>Q8TDT2</id>
        <label>GPR152</label>
    </interactant>
    <organismsDiffer>false</organismsDiffer>
    <experiments>3</experiments>
</comment>
<comment type="interaction">
    <interactant intactId="EBI-2873970">
        <id>P13236</id>
    </interactant>
    <interactant intactId="EBI-13067820">
        <id>Q9NZD1</id>
        <label>GPRC5D</label>
    </interactant>
    <organismsDiffer>false</organismsDiffer>
    <experiments>3</experiments>
</comment>
<comment type="interaction">
    <interactant intactId="EBI-2873970">
        <id>P13236</id>
    </interactant>
    <interactant intactId="EBI-10317612">
        <id>Q9P0N8</id>
        <label>MARCHF2</label>
    </interactant>
    <organismsDiffer>false</organismsDiffer>
    <experiments>3</experiments>
</comment>
<comment type="interaction">
    <interactant intactId="EBI-2873970">
        <id>P13236</id>
    </interactant>
    <interactant intactId="EBI-5454865">
        <id>Q6IN84</id>
        <label>MRM1</label>
    </interactant>
    <organismsDiffer>false</organismsDiffer>
    <experiments>3</experiments>
</comment>
<comment type="interaction">
    <interactant intactId="EBI-2873970">
        <id>P13236</id>
    </interactant>
    <interactant intactId="EBI-18159983">
        <id>Q3KNW5</id>
        <label>SLC10A6</label>
    </interactant>
    <organismsDiffer>false</organismsDiffer>
    <experiments>3</experiments>
</comment>
<comment type="interaction">
    <interactant intactId="EBI-2873970">
        <id>P13236</id>
    </interactant>
    <interactant intactId="EBI-17595455">
        <id>P54219-3</id>
        <label>SLC18A1</label>
    </interactant>
    <organismsDiffer>false</organismsDiffer>
    <experiments>3</experiments>
</comment>
<comment type="interaction">
    <interactant intactId="EBI-2873970">
        <id>P13236</id>
    </interactant>
    <interactant intactId="EBI-8644112">
        <id>Q9BRI3</id>
        <label>SLC30A2</label>
    </interactant>
    <organismsDiffer>false</organismsDiffer>
    <experiments>8</experiments>
</comment>
<comment type="interaction">
    <interactant intactId="EBI-2873970">
        <id>P13236</id>
    </interactant>
    <interactant intactId="EBI-10262251">
        <id>Q8IWU4</id>
        <label>SLC30A8</label>
    </interactant>
    <organismsDiffer>false</organismsDiffer>
    <experiments>3</experiments>
</comment>
<comment type="interaction">
    <interactant intactId="EBI-2873970">
        <id>P13236</id>
    </interactant>
    <interactant intactId="EBI-4289564">
        <id>P30825</id>
        <label>SLC7A1</label>
    </interactant>
    <organismsDiffer>false</organismsDiffer>
    <experiments>3</experiments>
</comment>
<comment type="interaction">
    <interactant intactId="EBI-2873970">
        <id>P13236</id>
    </interactant>
    <interactant intactId="EBI-17933167">
        <id>Q9NYW4</id>
        <label>TAS2R5</label>
    </interactant>
    <organismsDiffer>false</organismsDiffer>
    <experiments>3</experiments>
</comment>
<comment type="interaction">
    <interactant intactId="EBI-2873970">
        <id>P13236</id>
    </interactant>
    <interactant intactId="EBI-6268651">
        <id>Q9NPL8</id>
        <label>TIMMDC1</label>
    </interactant>
    <organismsDiffer>false</organismsDiffer>
    <experiments>3</experiments>
</comment>
<comment type="interaction">
    <interactant intactId="EBI-2873970">
        <id>P13236</id>
    </interactant>
    <interactant intactId="EBI-8638294">
        <id>Q9NUH8</id>
        <label>TMEM14B</label>
    </interactant>
    <organismsDiffer>false</organismsDiffer>
    <experiments>3</experiments>
</comment>
<comment type="interaction">
    <interactant intactId="EBI-2873970">
        <id>P13236</id>
    </interactant>
    <interactant intactId="EBI-11724423">
        <id>Q7Z7N9</id>
        <label>TMEM179B</label>
    </interactant>
    <organismsDiffer>false</organismsDiffer>
    <experiments>3</experiments>
</comment>
<comment type="interaction">
    <interactant intactId="EBI-2873970">
        <id>P13236</id>
    </interactant>
    <interactant intactId="EBI-2548832">
        <id>Q8N661</id>
        <label>TMEM86B</label>
    </interactant>
    <organismsDiffer>false</organismsDiffer>
    <experiments>3</experiments>
</comment>
<comment type="interaction">
    <interactant intactId="EBI-2873970">
        <id>P13236</id>
    </interactant>
    <interactant intactId="EBI-13356252">
        <id>Q86WB7-2</id>
        <label>UNC93A</label>
    </interactant>
    <organismsDiffer>false</organismsDiffer>
    <experiments>3</experiments>
</comment>
<comment type="interaction">
    <interactant intactId="EBI-6625160">
        <id>PRO_0000005165</id>
    </interactant>
    <interactant intactId="EBI-489374">
        <id>P51681</id>
        <label>CCR5</label>
    </interactant>
    <organismsDiffer>false</organismsDiffer>
    <experiments>2</experiments>
</comment>
<comment type="subcellular location">
    <subcellularLocation>
        <location>Secreted</location>
    </subcellularLocation>
</comment>
<comment type="induction">
    <text>By mitogens.</text>
</comment>
<comment type="PTM">
    <text>N-terminal processed form MIP-1-beta(3-69) is produced by proteolytic cleavage after secretion from peripheral blood lymphocytes.</text>
</comment>
<comment type="similarity">
    <text evidence="7">Belongs to the intercrine beta (chemokine CC) family.</text>
</comment>
<comment type="caution">
    <text evidence="8">Was originally thought to be a ligand for CCR8.</text>
</comment>
<comment type="online information" name="Wikipedia">
    <link uri="https://en.wikipedia.org/wiki/Macrophage_Inflammatory_Protein"/>
    <text>Macrophage inflammatory protein entry</text>
</comment>
<feature type="signal peptide">
    <location>
        <begin position="1"/>
        <end position="23"/>
    </location>
</feature>
<feature type="chain" id="PRO_0000005164" description="C-C motif chemokine 4">
    <location>
        <begin position="24"/>
        <end position="92"/>
    </location>
</feature>
<feature type="chain" id="PRO_0000005165" description="MIP-1-beta(3-69)">
    <location>
        <begin position="26"/>
        <end position="92"/>
    </location>
</feature>
<feature type="disulfide bond" evidence="1">
    <location>
        <begin position="34"/>
        <end position="58"/>
    </location>
</feature>
<feature type="disulfide bond" evidence="1">
    <location>
        <begin position="35"/>
        <end position="74"/>
    </location>
</feature>
<feature type="sequence variant" id="VAR_048702" description="In dbSNP:rs1049752.">
    <original>M</original>
    <variation>V</variation>
    <location>
        <position position="12"/>
    </location>
</feature>
<feature type="sequence variant" id="VAR_048703" description="In dbSNP:rs1130750.">
    <original>P</original>
    <variation>L</variation>
    <location>
        <position position="20"/>
    </location>
</feature>
<feature type="sequence variant" id="VAR_059211" description="In dbSNP:rs1719152." evidence="4 5">
    <original>S</original>
    <variation>T</variation>
    <location>
        <position position="80"/>
    </location>
</feature>
<feature type="sequence conflict" description="In Ref. 11; AAA36752." evidence="7" ref="11">
    <original>T</original>
    <variation>C</variation>
    <location>
        <position position="6"/>
    </location>
</feature>
<feature type="sequence conflict" description="In Ref. 6; AAB00790." evidence="7" ref="6">
    <original>A</original>
    <variation>S</variation>
    <location>
        <position position="15"/>
    </location>
</feature>
<feature type="sequence conflict" description="In Ref. 3; AAA36656." evidence="7" ref="3">
    <original>ARKLPR</original>
    <variation>REASS</variation>
    <location>
        <begin position="40"/>
        <end position="45"/>
    </location>
</feature>
<feature type="sequence conflict" description="In Ref. 11; AAA36752." evidence="7" ref="11">
    <original>S</original>
    <variation>I</variation>
    <location>
        <position position="56"/>
    </location>
</feature>
<feature type="sequence conflict" description="In Ref. 6; CAA37722/AAB00790." evidence="7" ref="6">
    <original>S</original>
    <variation>G</variation>
    <location>
        <position position="70"/>
    </location>
</feature>
<feature type="strand" evidence="10">
    <location>
        <begin position="26"/>
        <end position="28"/>
    </location>
</feature>
<feature type="turn" evidence="10">
    <location>
        <begin position="30"/>
        <end position="32"/>
    </location>
</feature>
<feature type="helix" evidence="10">
    <location>
        <begin position="45"/>
        <end position="47"/>
    </location>
</feature>
<feature type="strand" evidence="10">
    <location>
        <begin position="48"/>
        <end position="53"/>
    </location>
</feature>
<feature type="strand" evidence="10">
    <location>
        <begin position="58"/>
        <end position="60"/>
    </location>
</feature>
<feature type="strand" evidence="10">
    <location>
        <begin position="63"/>
        <end position="67"/>
    </location>
</feature>
<feature type="strand" evidence="9">
    <location>
        <begin position="68"/>
        <end position="70"/>
    </location>
</feature>
<feature type="strand" evidence="10">
    <location>
        <begin position="72"/>
        <end position="75"/>
    </location>
</feature>
<feature type="helix" evidence="10">
    <location>
        <begin position="80"/>
        <end position="90"/>
    </location>
</feature>